<organism>
    <name type="scientific">Mus musculus</name>
    <name type="common">Mouse</name>
    <dbReference type="NCBI Taxonomy" id="10090"/>
    <lineage>
        <taxon>Eukaryota</taxon>
        <taxon>Metazoa</taxon>
        <taxon>Chordata</taxon>
        <taxon>Craniata</taxon>
        <taxon>Vertebrata</taxon>
        <taxon>Euteleostomi</taxon>
        <taxon>Mammalia</taxon>
        <taxon>Eutheria</taxon>
        <taxon>Euarchontoglires</taxon>
        <taxon>Glires</taxon>
        <taxon>Rodentia</taxon>
        <taxon>Myomorpha</taxon>
        <taxon>Muroidea</taxon>
        <taxon>Muridae</taxon>
        <taxon>Murinae</taxon>
        <taxon>Mus</taxon>
        <taxon>Mus</taxon>
    </lineage>
</organism>
<feature type="chain" id="PRO_0000049208" description="Homeobox protein OTX1">
    <location>
        <begin position="1"/>
        <end position="355"/>
    </location>
</feature>
<feature type="DNA-binding region" description="Homeobox" evidence="2">
    <location>
        <begin position="38"/>
        <end position="97"/>
    </location>
</feature>
<feature type="region of interest" description="Disordered" evidence="3">
    <location>
        <begin position="91"/>
        <end position="144"/>
    </location>
</feature>
<feature type="region of interest" description="Disordered" evidence="3">
    <location>
        <begin position="257"/>
        <end position="306"/>
    </location>
</feature>
<feature type="compositionally biased region" description="Polar residues" evidence="3">
    <location>
        <begin position="94"/>
        <end position="104"/>
    </location>
</feature>
<feature type="compositionally biased region" description="Low complexity" evidence="3">
    <location>
        <begin position="117"/>
        <end position="144"/>
    </location>
</feature>
<feature type="compositionally biased region" description="Basic residues" evidence="3">
    <location>
        <begin position="274"/>
        <end position="284"/>
    </location>
</feature>
<feature type="compositionally biased region" description="Basic residues" evidence="3">
    <location>
        <begin position="291"/>
        <end position="303"/>
    </location>
</feature>
<feature type="cross-link" description="Glycyl lysine isopeptide (Lys-Gly) (interchain with G-Cter in SUMO2)" evidence="1">
    <location>
        <position position="345"/>
    </location>
</feature>
<dbReference type="EMBL" id="BC057105">
    <property type="protein sequence ID" value="AAH57105.1"/>
    <property type="molecule type" value="mRNA"/>
</dbReference>
<dbReference type="EMBL" id="BC058354">
    <property type="protein sequence ID" value="AAH58354.1"/>
    <property type="molecule type" value="mRNA"/>
</dbReference>
<dbReference type="EMBL" id="X68883">
    <property type="protein sequence ID" value="CAA48754.1"/>
    <property type="molecule type" value="mRNA"/>
</dbReference>
<dbReference type="CCDS" id="CCDS24468.1"/>
<dbReference type="PIR" id="S35345">
    <property type="entry name" value="S35345"/>
</dbReference>
<dbReference type="RefSeq" id="NP_035153.1">
    <property type="nucleotide sequence ID" value="NM_011023.3"/>
</dbReference>
<dbReference type="RefSeq" id="XP_017169827.1">
    <property type="nucleotide sequence ID" value="XM_017314338.1"/>
</dbReference>
<dbReference type="RefSeq" id="XP_036012308.1">
    <property type="nucleotide sequence ID" value="XM_036156415.1"/>
</dbReference>
<dbReference type="SMR" id="P80205"/>
<dbReference type="BioGRID" id="201992">
    <property type="interactions" value="1"/>
</dbReference>
<dbReference type="FunCoup" id="P80205">
    <property type="interactions" value="1162"/>
</dbReference>
<dbReference type="STRING" id="10090.ENSMUSP00000006071"/>
<dbReference type="iPTMnet" id="P80205"/>
<dbReference type="PhosphoSitePlus" id="P80205"/>
<dbReference type="PaxDb" id="10090-ENSMUSP00000006071"/>
<dbReference type="ProteomicsDB" id="294407"/>
<dbReference type="Antibodypedia" id="3233">
    <property type="antibodies" value="272 antibodies from 29 providers"/>
</dbReference>
<dbReference type="DNASU" id="18423"/>
<dbReference type="Ensembl" id="ENSMUST00000006071.14">
    <property type="protein sequence ID" value="ENSMUSP00000006071.8"/>
    <property type="gene ID" value="ENSMUSG00000005917.16"/>
</dbReference>
<dbReference type="GeneID" id="18423"/>
<dbReference type="KEGG" id="mmu:18423"/>
<dbReference type="UCSC" id="uc007idy.1">
    <property type="organism name" value="mouse"/>
</dbReference>
<dbReference type="AGR" id="MGI:97450"/>
<dbReference type="CTD" id="5013"/>
<dbReference type="MGI" id="MGI:97450">
    <property type="gene designation" value="Otx1"/>
</dbReference>
<dbReference type="VEuPathDB" id="HostDB:ENSMUSG00000005917"/>
<dbReference type="eggNOG" id="KOG2251">
    <property type="taxonomic scope" value="Eukaryota"/>
</dbReference>
<dbReference type="GeneTree" id="ENSGT00940000161234"/>
<dbReference type="HOGENOM" id="CLU_064370_0_0_1"/>
<dbReference type="InParanoid" id="P80205"/>
<dbReference type="OMA" id="ASYSMSY"/>
<dbReference type="OrthoDB" id="6159439at2759"/>
<dbReference type="PhylomeDB" id="P80205"/>
<dbReference type="TreeFam" id="TF351179"/>
<dbReference type="BioGRID-ORCS" id="18423">
    <property type="hits" value="1 hit in 79 CRISPR screens"/>
</dbReference>
<dbReference type="PRO" id="PR:P80205"/>
<dbReference type="Proteomes" id="UP000000589">
    <property type="component" value="Chromosome 11"/>
</dbReference>
<dbReference type="RNAct" id="P80205">
    <property type="molecule type" value="protein"/>
</dbReference>
<dbReference type="Bgee" id="ENSMUSG00000005917">
    <property type="expression patterns" value="Expressed in nasolacrimal duct and 119 other cell types or tissues"/>
</dbReference>
<dbReference type="ExpressionAtlas" id="P80205">
    <property type="expression patterns" value="baseline and differential"/>
</dbReference>
<dbReference type="GO" id="GO:0005634">
    <property type="term" value="C:nucleus"/>
    <property type="evidence" value="ECO:0000305"/>
    <property type="project" value="MGI"/>
</dbReference>
<dbReference type="GO" id="GO:0001228">
    <property type="term" value="F:DNA-binding transcription activator activity, RNA polymerase II-specific"/>
    <property type="evidence" value="ECO:0007669"/>
    <property type="project" value="Ensembl"/>
</dbReference>
<dbReference type="GO" id="GO:0000978">
    <property type="term" value="F:RNA polymerase II cis-regulatory region sequence-specific DNA binding"/>
    <property type="evidence" value="ECO:0007669"/>
    <property type="project" value="Ensembl"/>
</dbReference>
<dbReference type="GO" id="GO:0009952">
    <property type="term" value="P:anterior/posterior pattern specification"/>
    <property type="evidence" value="ECO:0000316"/>
    <property type="project" value="MGI"/>
</dbReference>
<dbReference type="GO" id="GO:0048852">
    <property type="term" value="P:diencephalon morphogenesis"/>
    <property type="evidence" value="ECO:0000316"/>
    <property type="project" value="MGI"/>
</dbReference>
<dbReference type="GO" id="GO:0030900">
    <property type="term" value="P:forebrain development"/>
    <property type="evidence" value="ECO:0000316"/>
    <property type="project" value="MGI"/>
</dbReference>
<dbReference type="GO" id="GO:0042472">
    <property type="term" value="P:inner ear morphogenesis"/>
    <property type="evidence" value="ECO:0000315"/>
    <property type="project" value="MGI"/>
</dbReference>
<dbReference type="GO" id="GO:0022037">
    <property type="term" value="P:metencephalon development"/>
    <property type="evidence" value="ECO:0000316"/>
    <property type="project" value="MGI"/>
</dbReference>
<dbReference type="GO" id="GO:0030901">
    <property type="term" value="P:midbrain development"/>
    <property type="evidence" value="ECO:0000316"/>
    <property type="project" value="MGI"/>
</dbReference>
<dbReference type="GO" id="GO:0006357">
    <property type="term" value="P:regulation of transcription by RNA polymerase II"/>
    <property type="evidence" value="ECO:0000314"/>
    <property type="project" value="MGI"/>
</dbReference>
<dbReference type="CDD" id="cd00086">
    <property type="entry name" value="homeodomain"/>
    <property type="match status" value="1"/>
</dbReference>
<dbReference type="FunFam" id="1.10.10.60:FF:000142">
    <property type="entry name" value="homeobox protein OTX2 isoform X2"/>
    <property type="match status" value="1"/>
</dbReference>
<dbReference type="Gene3D" id="1.10.10.60">
    <property type="entry name" value="Homeodomain-like"/>
    <property type="match status" value="1"/>
</dbReference>
<dbReference type="InterPro" id="IPR001356">
    <property type="entry name" value="HD"/>
</dbReference>
<dbReference type="InterPro" id="IPR017970">
    <property type="entry name" value="Homeobox_CS"/>
</dbReference>
<dbReference type="InterPro" id="IPR009057">
    <property type="entry name" value="Homeodomain-like_sf"/>
</dbReference>
<dbReference type="InterPro" id="IPR003026">
    <property type="entry name" value="Otx1_TF"/>
</dbReference>
<dbReference type="InterPro" id="IPR003025">
    <property type="entry name" value="Otx_TF"/>
</dbReference>
<dbReference type="InterPro" id="IPR013851">
    <property type="entry name" value="Otx_TF_C"/>
</dbReference>
<dbReference type="PANTHER" id="PTHR45793">
    <property type="entry name" value="HOMEOBOX PROTEIN"/>
    <property type="match status" value="1"/>
</dbReference>
<dbReference type="PANTHER" id="PTHR45793:SF9">
    <property type="entry name" value="HOMEOBOX PROTEIN OTX1"/>
    <property type="match status" value="1"/>
</dbReference>
<dbReference type="Pfam" id="PF00046">
    <property type="entry name" value="Homeodomain"/>
    <property type="match status" value="1"/>
</dbReference>
<dbReference type="Pfam" id="PF03529">
    <property type="entry name" value="TF_Otx"/>
    <property type="match status" value="1"/>
</dbReference>
<dbReference type="PRINTS" id="PR01256">
    <property type="entry name" value="OTX1HOMEOBOX"/>
</dbReference>
<dbReference type="PRINTS" id="PR01255">
    <property type="entry name" value="OTXHOMEOBOX"/>
</dbReference>
<dbReference type="SMART" id="SM00389">
    <property type="entry name" value="HOX"/>
    <property type="match status" value="1"/>
</dbReference>
<dbReference type="SUPFAM" id="SSF46689">
    <property type="entry name" value="Homeodomain-like"/>
    <property type="match status" value="1"/>
</dbReference>
<dbReference type="PROSITE" id="PS00027">
    <property type="entry name" value="HOMEOBOX_1"/>
    <property type="match status" value="1"/>
</dbReference>
<dbReference type="PROSITE" id="PS50071">
    <property type="entry name" value="HOMEOBOX_2"/>
    <property type="match status" value="1"/>
</dbReference>
<name>OTX1_MOUSE</name>
<comment type="function">
    <text>Probably plays a role in the development of the brain and the sense organs. Can bind to the BCD target sequence (BTS): 5'-TCTAATCCC-3'.</text>
</comment>
<comment type="subcellular location">
    <subcellularLocation>
        <location evidence="4">Nucleus</location>
    </subcellularLocation>
</comment>
<comment type="tissue specificity">
    <text>Brain: restricted regions of the developing rostral brain including the presumptive cerebral cortex and olfactory bulbs; expressed in the developing olfactory, auricolar and ocular systems, including the covering of the optic nerve.</text>
</comment>
<comment type="developmental stage">
    <text>Embryo.</text>
</comment>
<comment type="similarity">
    <text evidence="4">Belongs to the paired homeobox family. Bicoid subfamily.</text>
</comment>
<protein>
    <recommendedName>
        <fullName>Homeobox protein OTX1</fullName>
    </recommendedName>
    <alternativeName>
        <fullName>Orthodenticle homolog 1</fullName>
    </alternativeName>
</protein>
<evidence type="ECO:0000250" key="1">
    <source>
        <dbReference type="UniProtKB" id="P32242"/>
    </source>
</evidence>
<evidence type="ECO:0000255" key="2">
    <source>
        <dbReference type="PROSITE-ProRule" id="PRU00108"/>
    </source>
</evidence>
<evidence type="ECO:0000256" key="3">
    <source>
        <dbReference type="SAM" id="MobiDB-lite"/>
    </source>
</evidence>
<evidence type="ECO:0000305" key="4"/>
<gene>
    <name type="primary">Otx1</name>
    <name type="synonym">Otx-1</name>
</gene>
<reference key="1">
    <citation type="journal article" date="1993" name="EMBO J.">
        <title>A vertebrate gene related to orthodenticle contains a homeodomain of the bicoid class and demarcates anterior neuroectoderm in the gastrulating mouse embryo.</title>
        <authorList>
            <person name="Simeone A."/>
            <person name="Acampora D."/>
            <person name="Mallamaci A."/>
            <person name="Stornaiuolo A."/>
            <person name="D'Apice M.R."/>
            <person name="Nigro V."/>
            <person name="Boncinelli E."/>
        </authorList>
    </citation>
    <scope>NUCLEOTIDE SEQUENCE [MRNA]</scope>
    <source>
        <strain>C57BL/6J</strain>
    </source>
</reference>
<reference key="2">
    <citation type="journal article" date="2004" name="Genome Res.">
        <title>The status, quality, and expansion of the NIH full-length cDNA project: the Mammalian Gene Collection (MGC).</title>
        <authorList>
            <consortium name="The MGC Project Team"/>
        </authorList>
    </citation>
    <scope>NUCLEOTIDE SEQUENCE [LARGE SCALE MRNA]</scope>
    <source>
        <strain>C57BL/6J</strain>
        <tissue>Brain</tissue>
    </source>
</reference>
<reference key="3">
    <citation type="journal article" date="1992" name="Nature">
        <title>Nested expression domains of four homeobox genes in developing rostral brain.</title>
        <authorList>
            <person name="Simeone A."/>
            <person name="Acampora D."/>
            <person name="Gulisano M."/>
            <person name="Stornaiuolo A."/>
            <person name="Boncinelli E."/>
        </authorList>
    </citation>
    <scope>NUCLEOTIDE SEQUENCE [MRNA] OF 31-98</scope>
</reference>
<proteinExistence type="evidence at transcript level"/>
<accession>P80205</accession>
<keyword id="KW-0217">Developmental protein</keyword>
<keyword id="KW-0238">DNA-binding</keyword>
<keyword id="KW-0371">Homeobox</keyword>
<keyword id="KW-1017">Isopeptide bond</keyword>
<keyword id="KW-0539">Nucleus</keyword>
<keyword id="KW-1185">Reference proteome</keyword>
<keyword id="KW-0832">Ubl conjugation</keyword>
<sequence length="355" mass="37532">MMSYLKQPPYGMNGLGLAGPAMDLLHPSVGYPATPRKQRRERTTFTRSQLDVLEALFAKTRYPDIFMREEVALKINLPESRVQVWFKNRRAKCRQQQQSGNGTKTRPVKKKSSPVRESSGSESSGQFTPPAVSSSASSSSSASSASANPAAAAAAGLGGNPVAAASSLSTPTASSIWSPASISPGSAPTSVSVPEPLAAPSNASCMQRSVAAGAATAAASYPMSYGQGGSYGQGYPAPSSSYFGGVDCSSYLAPMHSHHHPHQLSPMAPSSMAGHHHHHPHAHHPLSQSSGHHHHHHHHHHHQGYGGSGLAFNSADCLDYKEPAAAAASSAWKLNFNSPDCLDYKDQASWRFQVL</sequence>